<organism>
    <name type="scientific">Anaeromyxobacter dehalogenans (strain 2CP-C)</name>
    <dbReference type="NCBI Taxonomy" id="290397"/>
    <lineage>
        <taxon>Bacteria</taxon>
        <taxon>Pseudomonadati</taxon>
        <taxon>Myxococcota</taxon>
        <taxon>Myxococcia</taxon>
        <taxon>Myxococcales</taxon>
        <taxon>Cystobacterineae</taxon>
        <taxon>Anaeromyxobacteraceae</taxon>
        <taxon>Anaeromyxobacter</taxon>
    </lineage>
</organism>
<gene>
    <name evidence="1" type="primary">purL</name>
    <name type="ordered locus">Adeh_4214</name>
</gene>
<name>PURL_ANADE</name>
<keyword id="KW-0067">ATP-binding</keyword>
<keyword id="KW-0963">Cytoplasm</keyword>
<keyword id="KW-0436">Ligase</keyword>
<keyword id="KW-0460">Magnesium</keyword>
<keyword id="KW-0479">Metal-binding</keyword>
<keyword id="KW-0547">Nucleotide-binding</keyword>
<keyword id="KW-0658">Purine biosynthesis</keyword>
<keyword id="KW-1185">Reference proteome</keyword>
<feature type="chain" id="PRO_0000236647" description="Phosphoribosylformylglycinamidine synthase subunit PurL">
    <location>
        <begin position="1"/>
        <end position="759"/>
    </location>
</feature>
<feature type="active site" evidence="1">
    <location>
        <position position="46"/>
    </location>
</feature>
<feature type="active site" description="Proton acceptor" evidence="1">
    <location>
        <position position="92"/>
    </location>
</feature>
<feature type="binding site" evidence="1">
    <location>
        <position position="49"/>
    </location>
    <ligand>
        <name>ATP</name>
        <dbReference type="ChEBI" id="CHEBI:30616"/>
    </ligand>
</feature>
<feature type="binding site" evidence="1">
    <location>
        <position position="88"/>
    </location>
    <ligand>
        <name>ATP</name>
        <dbReference type="ChEBI" id="CHEBI:30616"/>
    </ligand>
</feature>
<feature type="binding site" evidence="1">
    <location>
        <position position="90"/>
    </location>
    <ligand>
        <name>Mg(2+)</name>
        <dbReference type="ChEBI" id="CHEBI:18420"/>
        <label>1</label>
    </ligand>
</feature>
<feature type="binding site" evidence="1">
    <location>
        <begin position="91"/>
        <end position="94"/>
    </location>
    <ligand>
        <name>substrate</name>
    </ligand>
</feature>
<feature type="binding site" evidence="1">
    <location>
        <position position="113"/>
    </location>
    <ligand>
        <name>substrate</name>
    </ligand>
</feature>
<feature type="binding site" evidence="1">
    <location>
        <position position="114"/>
    </location>
    <ligand>
        <name>Mg(2+)</name>
        <dbReference type="ChEBI" id="CHEBI:18420"/>
        <label>2</label>
    </ligand>
</feature>
<feature type="binding site" evidence="1">
    <location>
        <position position="237"/>
    </location>
    <ligand>
        <name>substrate</name>
    </ligand>
</feature>
<feature type="binding site" evidence="1">
    <location>
        <position position="265"/>
    </location>
    <ligand>
        <name>Mg(2+)</name>
        <dbReference type="ChEBI" id="CHEBI:18420"/>
        <label>2</label>
    </ligand>
</feature>
<feature type="binding site" evidence="1">
    <location>
        <begin position="309"/>
        <end position="311"/>
    </location>
    <ligand>
        <name>substrate</name>
    </ligand>
</feature>
<feature type="binding site" evidence="1">
    <location>
        <position position="498"/>
    </location>
    <ligand>
        <name>ATP</name>
        <dbReference type="ChEBI" id="CHEBI:30616"/>
    </ligand>
</feature>
<feature type="binding site" evidence="1">
    <location>
        <position position="535"/>
    </location>
    <ligand>
        <name>ATP</name>
        <dbReference type="ChEBI" id="CHEBI:30616"/>
    </ligand>
</feature>
<feature type="binding site" evidence="1">
    <location>
        <position position="536"/>
    </location>
    <ligand>
        <name>Mg(2+)</name>
        <dbReference type="ChEBI" id="CHEBI:18420"/>
        <label>1</label>
    </ligand>
</feature>
<feature type="binding site" evidence="1">
    <location>
        <position position="538"/>
    </location>
    <ligand>
        <name>substrate</name>
    </ligand>
</feature>
<accession>Q2IHC1</accession>
<reference key="1">
    <citation type="submission" date="2006-01" db="EMBL/GenBank/DDBJ databases">
        <title>Complete sequence of Anaeromyxobacter dehalogenans 2CP-C.</title>
        <authorList>
            <person name="Copeland A."/>
            <person name="Lucas S."/>
            <person name="Lapidus A."/>
            <person name="Barry K."/>
            <person name="Detter J.C."/>
            <person name="Glavina T."/>
            <person name="Hammon N."/>
            <person name="Israni S."/>
            <person name="Pitluck S."/>
            <person name="Brettin T."/>
            <person name="Bruce D."/>
            <person name="Han C."/>
            <person name="Tapia R."/>
            <person name="Gilna P."/>
            <person name="Kiss H."/>
            <person name="Schmutz J."/>
            <person name="Larimer F."/>
            <person name="Land M."/>
            <person name="Kyrpides N."/>
            <person name="Anderson I."/>
            <person name="Sanford R.A."/>
            <person name="Ritalahti K.M."/>
            <person name="Thomas H.S."/>
            <person name="Kirby J.R."/>
            <person name="Zhulin I.B."/>
            <person name="Loeffler F.E."/>
            <person name="Richardson P."/>
        </authorList>
    </citation>
    <scope>NUCLEOTIDE SEQUENCE [LARGE SCALE GENOMIC DNA]</scope>
    <source>
        <strain>2CP-C</strain>
    </source>
</reference>
<dbReference type="EC" id="6.3.5.3" evidence="1"/>
<dbReference type="EMBL" id="CP000251">
    <property type="protein sequence ID" value="ABC83978.1"/>
    <property type="molecule type" value="Genomic_DNA"/>
</dbReference>
<dbReference type="RefSeq" id="WP_011423260.1">
    <property type="nucleotide sequence ID" value="NC_007760.1"/>
</dbReference>
<dbReference type="SMR" id="Q2IHC1"/>
<dbReference type="STRING" id="290397.Adeh_4214"/>
<dbReference type="KEGG" id="ade:Adeh_4214"/>
<dbReference type="eggNOG" id="COG0046">
    <property type="taxonomic scope" value="Bacteria"/>
</dbReference>
<dbReference type="HOGENOM" id="CLU_003100_0_1_7"/>
<dbReference type="OrthoDB" id="9804441at2"/>
<dbReference type="UniPathway" id="UPA00074">
    <property type="reaction ID" value="UER00128"/>
</dbReference>
<dbReference type="Proteomes" id="UP000001935">
    <property type="component" value="Chromosome"/>
</dbReference>
<dbReference type="GO" id="GO:0005737">
    <property type="term" value="C:cytoplasm"/>
    <property type="evidence" value="ECO:0007669"/>
    <property type="project" value="UniProtKB-SubCell"/>
</dbReference>
<dbReference type="GO" id="GO:0005524">
    <property type="term" value="F:ATP binding"/>
    <property type="evidence" value="ECO:0007669"/>
    <property type="project" value="UniProtKB-UniRule"/>
</dbReference>
<dbReference type="GO" id="GO:0000287">
    <property type="term" value="F:magnesium ion binding"/>
    <property type="evidence" value="ECO:0007669"/>
    <property type="project" value="UniProtKB-UniRule"/>
</dbReference>
<dbReference type="GO" id="GO:0004642">
    <property type="term" value="F:phosphoribosylformylglycinamidine synthase activity"/>
    <property type="evidence" value="ECO:0007669"/>
    <property type="project" value="UniProtKB-UniRule"/>
</dbReference>
<dbReference type="GO" id="GO:0006189">
    <property type="term" value="P:'de novo' IMP biosynthetic process"/>
    <property type="evidence" value="ECO:0007669"/>
    <property type="project" value="UniProtKB-UniRule"/>
</dbReference>
<dbReference type="CDD" id="cd02203">
    <property type="entry name" value="PurL_repeat1"/>
    <property type="match status" value="1"/>
</dbReference>
<dbReference type="CDD" id="cd02204">
    <property type="entry name" value="PurL_repeat2"/>
    <property type="match status" value="1"/>
</dbReference>
<dbReference type="FunFam" id="3.30.1330.10:FF:000004">
    <property type="entry name" value="Phosphoribosylformylglycinamidine synthase subunit PurL"/>
    <property type="match status" value="1"/>
</dbReference>
<dbReference type="Gene3D" id="3.90.650.10">
    <property type="entry name" value="PurM-like C-terminal domain"/>
    <property type="match status" value="2"/>
</dbReference>
<dbReference type="Gene3D" id="3.30.1330.10">
    <property type="entry name" value="PurM-like, N-terminal domain"/>
    <property type="match status" value="2"/>
</dbReference>
<dbReference type="HAMAP" id="MF_00420">
    <property type="entry name" value="PurL_2"/>
    <property type="match status" value="1"/>
</dbReference>
<dbReference type="InterPro" id="IPR010074">
    <property type="entry name" value="PRibForGlyAmidine_synth_PurL"/>
</dbReference>
<dbReference type="InterPro" id="IPR041609">
    <property type="entry name" value="PurL_linker"/>
</dbReference>
<dbReference type="InterPro" id="IPR010918">
    <property type="entry name" value="PurM-like_C_dom"/>
</dbReference>
<dbReference type="InterPro" id="IPR036676">
    <property type="entry name" value="PurM-like_C_sf"/>
</dbReference>
<dbReference type="InterPro" id="IPR016188">
    <property type="entry name" value="PurM-like_N"/>
</dbReference>
<dbReference type="InterPro" id="IPR036921">
    <property type="entry name" value="PurM-like_N_sf"/>
</dbReference>
<dbReference type="NCBIfam" id="TIGR01736">
    <property type="entry name" value="FGAM_synth_II"/>
    <property type="match status" value="1"/>
</dbReference>
<dbReference type="NCBIfam" id="NF002290">
    <property type="entry name" value="PRK01213.1"/>
    <property type="match status" value="1"/>
</dbReference>
<dbReference type="PANTHER" id="PTHR43555">
    <property type="entry name" value="PHOSPHORIBOSYLFORMYLGLYCINAMIDINE SYNTHASE SUBUNIT PURL"/>
    <property type="match status" value="1"/>
</dbReference>
<dbReference type="PANTHER" id="PTHR43555:SF1">
    <property type="entry name" value="PHOSPHORIBOSYLFORMYLGLYCINAMIDINE SYNTHASE SUBUNIT PURL"/>
    <property type="match status" value="1"/>
</dbReference>
<dbReference type="Pfam" id="PF00586">
    <property type="entry name" value="AIRS"/>
    <property type="match status" value="2"/>
</dbReference>
<dbReference type="Pfam" id="PF02769">
    <property type="entry name" value="AIRS_C"/>
    <property type="match status" value="2"/>
</dbReference>
<dbReference type="Pfam" id="PF18072">
    <property type="entry name" value="FGAR-AT_linker"/>
    <property type="match status" value="1"/>
</dbReference>
<dbReference type="PIRSF" id="PIRSF001587">
    <property type="entry name" value="FGAM_synthase_II"/>
    <property type="match status" value="1"/>
</dbReference>
<dbReference type="SUPFAM" id="SSF56042">
    <property type="entry name" value="PurM C-terminal domain-like"/>
    <property type="match status" value="2"/>
</dbReference>
<dbReference type="SUPFAM" id="SSF55326">
    <property type="entry name" value="PurM N-terminal domain-like"/>
    <property type="match status" value="2"/>
</dbReference>
<sequence>MTEQITPEIVAQHGLKPDEYQRILEHLGRVPTLTELGVFSVMWSEHCSYKSSRVHLKTFPTSGPRVLQGPGENAGVVDLGDGLAAAFKMESHNHPSYIEPYQGAATGVGGILRDVFTMGARPIASLNALRFGDPSHPRTAYLLEGVVAGIGGYGNCMGVPTVGGEVAFHPSYNGNCLVNAFTLGILPADKIFRGTAAGVGNPVMYVGAKTGRDGIHGATMASAEFDASTEEKRPTVQVGDPFMEKLLLEACLELFQTDAVVGIQDMGAAGLTSSSVEMAGRGGNGLDLFLDKVPLREEGMTPYEILLSESQERMLLVAAEGKEELVRSICEKWDLDVAVIGRVTASGRWRAHWRGEVVADLPVDPLTEGAPKYHRPMTPHPALPALHAFDPATLPEPSDLGAALLRLLARPTIASKEWVYRQYDHMVRLVGAVRPGGDAAVVRLAVSHEKHAHKGIALSVGVNGRFCFLDPYLGAMHAVAECARNIACVGGEPIAITDCLNFGNPEKPEIMWQFAECVRGIGDACRAFGTPVVSGNVSLYNETEGQGILPTPTVGMVGLVEPVERTCHSTFRAAGDVVALVGSLQGEVGGSEYLSAEHGKEAGRPPALDLAREKAVQETVRRAVRAGLLSSAHDCSEGGLAVALAESCMMHEVPADGSTPAWIGCAVRIPFPVRKDFVLFGEDASRILVSLPKENAARFVELAQECGAPVIRLGAVGGDRLEIQGALSVPVEELARAWRDGIPAVLRRDAAHAGAAAPA</sequence>
<evidence type="ECO:0000255" key="1">
    <source>
        <dbReference type="HAMAP-Rule" id="MF_00420"/>
    </source>
</evidence>
<protein>
    <recommendedName>
        <fullName evidence="1">Phosphoribosylformylglycinamidine synthase subunit PurL</fullName>
        <shortName evidence="1">FGAM synthase</shortName>
        <ecNumber evidence="1">6.3.5.3</ecNumber>
    </recommendedName>
    <alternativeName>
        <fullName evidence="1">Formylglycinamide ribonucleotide amidotransferase subunit II</fullName>
        <shortName evidence="1">FGAR amidotransferase II</shortName>
        <shortName evidence="1">FGAR-AT II</shortName>
    </alternativeName>
    <alternativeName>
        <fullName evidence="1">Glutamine amidotransferase PurL</fullName>
    </alternativeName>
    <alternativeName>
        <fullName evidence="1">Phosphoribosylformylglycinamidine synthase subunit II</fullName>
    </alternativeName>
</protein>
<proteinExistence type="inferred from homology"/>
<comment type="function">
    <text evidence="1">Part of the phosphoribosylformylglycinamidine synthase complex involved in the purines biosynthetic pathway. Catalyzes the ATP-dependent conversion of formylglycinamide ribonucleotide (FGAR) and glutamine to yield formylglycinamidine ribonucleotide (FGAM) and glutamate. The FGAM synthase complex is composed of three subunits. PurQ produces an ammonia molecule by converting glutamine to glutamate. PurL transfers the ammonia molecule to FGAR to form FGAM in an ATP-dependent manner. PurS interacts with PurQ and PurL and is thought to assist in the transfer of the ammonia molecule from PurQ to PurL.</text>
</comment>
<comment type="catalytic activity">
    <reaction evidence="1">
        <text>N(2)-formyl-N(1)-(5-phospho-beta-D-ribosyl)glycinamide + L-glutamine + ATP + H2O = 2-formamido-N(1)-(5-O-phospho-beta-D-ribosyl)acetamidine + L-glutamate + ADP + phosphate + H(+)</text>
        <dbReference type="Rhea" id="RHEA:17129"/>
        <dbReference type="ChEBI" id="CHEBI:15377"/>
        <dbReference type="ChEBI" id="CHEBI:15378"/>
        <dbReference type="ChEBI" id="CHEBI:29985"/>
        <dbReference type="ChEBI" id="CHEBI:30616"/>
        <dbReference type="ChEBI" id="CHEBI:43474"/>
        <dbReference type="ChEBI" id="CHEBI:58359"/>
        <dbReference type="ChEBI" id="CHEBI:147286"/>
        <dbReference type="ChEBI" id="CHEBI:147287"/>
        <dbReference type="ChEBI" id="CHEBI:456216"/>
        <dbReference type="EC" id="6.3.5.3"/>
    </reaction>
</comment>
<comment type="pathway">
    <text evidence="1">Purine metabolism; IMP biosynthesis via de novo pathway; 5-amino-1-(5-phospho-D-ribosyl)imidazole from N(2)-formyl-N(1)-(5-phospho-D-ribosyl)glycinamide: step 1/2.</text>
</comment>
<comment type="subunit">
    <text evidence="1">Monomer. Part of the FGAM synthase complex composed of 1 PurL, 1 PurQ and 2 PurS subunits.</text>
</comment>
<comment type="subcellular location">
    <subcellularLocation>
        <location evidence="1">Cytoplasm</location>
    </subcellularLocation>
</comment>
<comment type="similarity">
    <text evidence="1">Belongs to the FGAMS family.</text>
</comment>